<proteinExistence type="inferred from homology"/>
<accession>B9J2U2</accession>
<sequence length="388" mass="43834">MIKNPKVLILTAHYGNGHVQVAKTLEQTFRQKGIKDVIVCDLFGESHPVITDITKYLYLKSYTIGKELYRLFYYGVEKIYDKKIASWYANFGRKRLKLLLQAEKPDIVINTFPIIAVPELKKQTGISIPVYNVLTDFCVHKIWIHREVDRYFVATDHVKKVMVDIGVPAEQIVETGIPIRSSFELKINSDIIYNKYQLCKNKKILLIVAGAHGVLGSVKELCQSFMSVPDLQVVVVCGKNEALKQDLLGLQEKNPDALKVFGYVENIDELFRVTSCMITKPGGITLSEAAALQVPVILYKPVPGQENENAMYFERKGAAVVIRDDSEVFAKTEALLQDDMRLLQMKEAMKSIYRPEPADHIVDTILAENHVEPNHIPIKSPALAQSFT</sequence>
<feature type="chain" id="PRO_1000165234" description="Processive diacylglycerol beta-glucosyltransferase">
    <location>
        <begin position="1"/>
        <end position="388"/>
    </location>
</feature>
<comment type="function">
    <text evidence="1">Processive glucosyltransferase involved in the biosynthesis of both the bilayer- and non-bilayer-forming membrane glucolipids. Is able to successively transfer up to three glucosyl residues to diacylglycerol (DAG), thereby catalyzing the formation of beta-monoglucosyl-DAG (3-O-(beta-D-glucopyranosyl)-1,2-diacyl-sn-glycerol), beta-diglucosyl-DAG (3-O-(beta-D-glucopyranosyl-beta-(1-&gt;6)-D-glucopyranosyl)-1,2-diacyl-sn-glycerol) and beta-triglucosyl-DAG (3-O-(beta-D-glucopyranosyl-beta-(1-&gt;6)-D-glucopyranosyl-beta-(1-&gt;6)-D-glucopyranosyl)-1,2-diacyl-sn-glycerol). Beta-diglucosyl-DAG is the predominant glycolipid found in Bacillales and is also used as a membrane anchor for lipoteichoic acid (LTA).</text>
</comment>
<comment type="catalytic activity">
    <reaction>
        <text>a 1,2-diacyl-3-O-(beta-D-glucopyranosyl)-sn-glycerol + UDP-alpha-D-glucose = a 1,2-diacyl-3-O-(beta-D-Glc-(1-&gt;6)-beta-D-Glc)-sn-glycerol + UDP + H(+)</text>
        <dbReference type="Rhea" id="RHEA:39031"/>
        <dbReference type="ChEBI" id="CHEBI:15378"/>
        <dbReference type="ChEBI" id="CHEBI:58223"/>
        <dbReference type="ChEBI" id="CHEBI:58885"/>
        <dbReference type="ChEBI" id="CHEBI:75799"/>
        <dbReference type="ChEBI" id="CHEBI:76264"/>
        <dbReference type="EC" id="2.4.1.315"/>
    </reaction>
</comment>
<comment type="catalytic activity">
    <reaction>
        <text>a 1,2-diacyl-3-O-(beta-D-Glc-(1-&gt;6)-beta-D-Glc)-sn-glycerol + UDP-alpha-D-glucose = a 1,2-diacyl-3-O-(beta-D-Glc-(1-&gt;6)-beta-D-Glc-(1-&gt;6)-beta-D-Glc)-sn-glycerol + UDP + H(+)</text>
        <dbReference type="Rhea" id="RHEA:39027"/>
        <dbReference type="ChEBI" id="CHEBI:15378"/>
        <dbReference type="ChEBI" id="CHEBI:58223"/>
        <dbReference type="ChEBI" id="CHEBI:58885"/>
        <dbReference type="ChEBI" id="CHEBI:76264"/>
        <dbReference type="ChEBI" id="CHEBI:76265"/>
        <dbReference type="EC" id="2.4.1.315"/>
    </reaction>
</comment>
<comment type="catalytic activity">
    <reaction evidence="1">
        <text>a 1,2-diacyl-sn-glycerol + UDP-alpha-D-glucose = a 1,2-diacyl-3-O-(beta-D-glucopyranosyl)-sn-glycerol + UDP + H(+)</text>
        <dbReference type="Rhea" id="RHEA:17285"/>
        <dbReference type="ChEBI" id="CHEBI:15378"/>
        <dbReference type="ChEBI" id="CHEBI:17815"/>
        <dbReference type="ChEBI" id="CHEBI:58223"/>
        <dbReference type="ChEBI" id="CHEBI:58885"/>
        <dbReference type="ChEBI" id="CHEBI:75799"/>
    </reaction>
</comment>
<comment type="pathway">
    <text evidence="1">Glycolipid metabolism; diglucosyl-diacylglycerol biosynthesis.</text>
</comment>
<comment type="subcellular location">
    <subcellularLocation>
        <location evidence="1">Cell membrane</location>
    </subcellularLocation>
</comment>
<comment type="similarity">
    <text evidence="1">Belongs to the glycosyltransferase 28 family. UgtP subfamily.</text>
</comment>
<protein>
    <recommendedName>
        <fullName evidence="1">Processive diacylglycerol beta-glucosyltransferase</fullName>
        <ecNumber>2.4.1.315</ecNumber>
    </recommendedName>
    <alternativeName>
        <fullName evidence="1">Beta-diglucosyldiacylglycerol synthase</fullName>
        <shortName evidence="1">Beta-DGS</shortName>
        <shortName evidence="1">DGlcDAG synthase</shortName>
        <shortName evidence="1">Glc2-DAG synthase</shortName>
    </alternativeName>
    <alternativeName>
        <fullName evidence="1">Beta-gentiobiosyldiacylglycerol synthase</fullName>
    </alternativeName>
    <alternativeName>
        <fullName evidence="1">Beta-monoglucosyldiacylglycerol synthase</fullName>
        <shortName evidence="1">Beta-MGS</shortName>
        <shortName evidence="1">MGlcDAG synthase</shortName>
    </alternativeName>
    <alternativeName>
        <fullName evidence="1">Beta-triglucosyldiacylglycerol synthase</fullName>
        <shortName evidence="1">TGlcDAG synthase</shortName>
    </alternativeName>
    <alternativeName>
        <fullName>Diglucosyl diacylglycerol synthase (1,6-linking)</fullName>
    </alternativeName>
    <alternativeName>
        <fullName evidence="1">Glucosyl-beta-1,6-glucosyldiacylglycerol synthase</fullName>
    </alternativeName>
    <alternativeName>
        <fullName evidence="1">UDP glucosyltransferase</fullName>
    </alternativeName>
    <alternativeName>
        <fullName evidence="1">UDP-glucose:1,2-diacylglycerol-3-beta-D-glucosyltransferase</fullName>
    </alternativeName>
</protein>
<dbReference type="EC" id="2.4.1.315"/>
<dbReference type="EMBL" id="CP000227">
    <property type="protein sequence ID" value="ACM11011.1"/>
    <property type="molecule type" value="Genomic_DNA"/>
</dbReference>
<dbReference type="SMR" id="B9J2U2"/>
<dbReference type="CAZy" id="GT28">
    <property type="family name" value="Glycosyltransferase Family 28"/>
</dbReference>
<dbReference type="KEGG" id="bcq:BCQ_0539"/>
<dbReference type="HOGENOM" id="CLU_028367_0_1_9"/>
<dbReference type="UniPathway" id="UPA00894"/>
<dbReference type="Proteomes" id="UP000000441">
    <property type="component" value="Chromosome"/>
</dbReference>
<dbReference type="GO" id="GO:0005886">
    <property type="term" value="C:plasma membrane"/>
    <property type="evidence" value="ECO:0007669"/>
    <property type="project" value="UniProtKB-SubCell"/>
</dbReference>
<dbReference type="GO" id="GO:0047228">
    <property type="term" value="F:1,2-diacylglycerol 3-glucosyltransferase activity"/>
    <property type="evidence" value="ECO:0007669"/>
    <property type="project" value="UniProtKB-UniRule"/>
</dbReference>
<dbReference type="GO" id="GO:0009246">
    <property type="term" value="P:enterobacterial common antigen biosynthetic process"/>
    <property type="evidence" value="ECO:0007669"/>
    <property type="project" value="UniProtKB-UniPathway"/>
</dbReference>
<dbReference type="GO" id="GO:0009247">
    <property type="term" value="P:glycolipid biosynthetic process"/>
    <property type="evidence" value="ECO:0007669"/>
    <property type="project" value="UniProtKB-UniRule"/>
</dbReference>
<dbReference type="GO" id="GO:0070395">
    <property type="term" value="P:lipoteichoic acid biosynthetic process"/>
    <property type="evidence" value="ECO:0007669"/>
    <property type="project" value="UniProtKB-UniRule"/>
</dbReference>
<dbReference type="CDD" id="cd17507">
    <property type="entry name" value="GT28_Beta-DGS-like"/>
    <property type="match status" value="1"/>
</dbReference>
<dbReference type="Gene3D" id="3.40.50.2000">
    <property type="entry name" value="Glycogen Phosphorylase B"/>
    <property type="match status" value="1"/>
</dbReference>
<dbReference type="HAMAP" id="MF_01280">
    <property type="entry name" value="Diacylglyc_glucosyltr"/>
    <property type="match status" value="1"/>
</dbReference>
<dbReference type="InterPro" id="IPR009695">
    <property type="entry name" value="Diacylglyc_glucosyltr_N"/>
</dbReference>
<dbReference type="InterPro" id="IPR007235">
    <property type="entry name" value="Glyco_trans_28_C"/>
</dbReference>
<dbReference type="InterPro" id="IPR050519">
    <property type="entry name" value="Glycosyltransf_28_UgtP"/>
</dbReference>
<dbReference type="InterPro" id="IPR023589">
    <property type="entry name" value="Pro_diacylglycrl_glcsylTrfase"/>
</dbReference>
<dbReference type="NCBIfam" id="NF010135">
    <property type="entry name" value="PRK13609.1"/>
    <property type="match status" value="1"/>
</dbReference>
<dbReference type="PANTHER" id="PTHR43025">
    <property type="entry name" value="MONOGALACTOSYLDIACYLGLYCEROL SYNTHASE"/>
    <property type="match status" value="1"/>
</dbReference>
<dbReference type="PANTHER" id="PTHR43025:SF3">
    <property type="entry name" value="MONOGALACTOSYLDIACYLGLYCEROL SYNTHASE 1, CHLOROPLASTIC"/>
    <property type="match status" value="1"/>
</dbReference>
<dbReference type="Pfam" id="PF04101">
    <property type="entry name" value="Glyco_tran_28_C"/>
    <property type="match status" value="1"/>
</dbReference>
<dbReference type="Pfam" id="PF06925">
    <property type="entry name" value="MGDG_synth"/>
    <property type="match status" value="1"/>
</dbReference>
<dbReference type="SUPFAM" id="SSF53756">
    <property type="entry name" value="UDP-Glycosyltransferase/glycogen phosphorylase"/>
    <property type="match status" value="1"/>
</dbReference>
<gene>
    <name evidence="1" type="primary">ugtP</name>
    <name type="ordered locus">BCQ_0539</name>
</gene>
<name>UGTP_BACCQ</name>
<reference key="1">
    <citation type="journal article" date="2009" name="J. Bacteriol.">
        <title>Complete genome sequence of the extremophilic Bacillus cereus strain Q1 with industrial applications.</title>
        <authorList>
            <person name="Xiong Z."/>
            <person name="Jiang Y."/>
            <person name="Qi D."/>
            <person name="Lu H."/>
            <person name="Yang F."/>
            <person name="Yang J."/>
            <person name="Chen L."/>
            <person name="Sun L."/>
            <person name="Xu X."/>
            <person name="Xue Y."/>
            <person name="Zhu Y."/>
            <person name="Jin Q."/>
        </authorList>
    </citation>
    <scope>NUCLEOTIDE SEQUENCE [LARGE SCALE GENOMIC DNA]</scope>
    <source>
        <strain>Q1</strain>
    </source>
</reference>
<keyword id="KW-0119">Carbohydrate metabolism</keyword>
<keyword id="KW-1003">Cell membrane</keyword>
<keyword id="KW-0328">Glycosyltransferase</keyword>
<keyword id="KW-0444">Lipid biosynthesis</keyword>
<keyword id="KW-0443">Lipid metabolism</keyword>
<keyword id="KW-0472">Membrane</keyword>
<keyword id="KW-0808">Transferase</keyword>
<evidence type="ECO:0000255" key="1">
    <source>
        <dbReference type="HAMAP-Rule" id="MF_01280"/>
    </source>
</evidence>
<organism>
    <name type="scientific">Bacillus cereus (strain Q1)</name>
    <dbReference type="NCBI Taxonomy" id="361100"/>
    <lineage>
        <taxon>Bacteria</taxon>
        <taxon>Bacillati</taxon>
        <taxon>Bacillota</taxon>
        <taxon>Bacilli</taxon>
        <taxon>Bacillales</taxon>
        <taxon>Bacillaceae</taxon>
        <taxon>Bacillus</taxon>
        <taxon>Bacillus cereus group</taxon>
    </lineage>
</organism>